<gene>
    <name evidence="1" type="primary">psbL</name>
    <name type="ordered locus">SynWH7803_0247</name>
</gene>
<feature type="chain" id="PRO_0000306217" description="Photosystem II reaction center protein L">
    <location>
        <begin position="1"/>
        <end position="39"/>
    </location>
</feature>
<feature type="transmembrane region" description="Helical" evidence="1">
    <location>
        <begin position="18"/>
        <end position="38"/>
    </location>
</feature>
<comment type="function">
    <text evidence="1">One of the components of the core complex of photosystem II (PSII). PSII is a light-driven water:plastoquinone oxidoreductase that uses light energy to abstract electrons from H(2)O, generating O(2) and a proton gradient subsequently used for ATP formation. It consists of a core antenna complex that captures photons, and an electron transfer chain that converts photonic excitation into a charge separation. This subunit is found at the monomer-monomer interface and is required for correct PSII assembly and/or dimerization.</text>
</comment>
<comment type="subunit">
    <text evidence="1">PSII is composed of 1 copy each of membrane proteins PsbA, PsbB, PsbC, PsbD, PsbE, PsbF, PsbH, PsbI, PsbJ, PsbK, PsbL, PsbM, PsbT, PsbX, PsbY, PsbZ, Psb30/Ycf12, peripheral proteins PsbO, CyanoQ (PsbQ), PsbU, PsbV and a large number of cofactors. It forms dimeric complexes.</text>
</comment>
<comment type="subcellular location">
    <subcellularLocation>
        <location evidence="1">Cellular thylakoid membrane</location>
        <topology evidence="1">Single-pass membrane protein</topology>
    </subcellularLocation>
</comment>
<comment type="similarity">
    <text evidence="1">Belongs to the PsbL family.</text>
</comment>
<keyword id="KW-0472">Membrane</keyword>
<keyword id="KW-0602">Photosynthesis</keyword>
<keyword id="KW-0604">Photosystem II</keyword>
<keyword id="KW-0674">Reaction center</keyword>
<keyword id="KW-1185">Reference proteome</keyword>
<keyword id="KW-0793">Thylakoid</keyword>
<keyword id="KW-0812">Transmembrane</keyword>
<keyword id="KW-1133">Transmembrane helix</keyword>
<sequence>MERNPNPNNLPVELNRTSLYLGLLVVFTTGILFSSYFFN</sequence>
<protein>
    <recommendedName>
        <fullName evidence="1">Photosystem II reaction center protein L</fullName>
        <shortName evidence="1">PSII-L</shortName>
    </recommendedName>
</protein>
<dbReference type="EMBL" id="CT971583">
    <property type="protein sequence ID" value="CAK22673.1"/>
    <property type="molecule type" value="Genomic_DNA"/>
</dbReference>
<dbReference type="SMR" id="A5GIA8"/>
<dbReference type="STRING" id="32051.SynWH7803_0247"/>
<dbReference type="KEGG" id="syx:SynWH7803_0247"/>
<dbReference type="eggNOG" id="ENOG5033AKP">
    <property type="taxonomic scope" value="Bacteria"/>
</dbReference>
<dbReference type="HOGENOM" id="CLU_214425_0_0_3"/>
<dbReference type="Proteomes" id="UP000001566">
    <property type="component" value="Chromosome"/>
</dbReference>
<dbReference type="GO" id="GO:0009539">
    <property type="term" value="C:photosystem II reaction center"/>
    <property type="evidence" value="ECO:0007669"/>
    <property type="project" value="InterPro"/>
</dbReference>
<dbReference type="GO" id="GO:0031676">
    <property type="term" value="C:plasma membrane-derived thylakoid membrane"/>
    <property type="evidence" value="ECO:0007669"/>
    <property type="project" value="UniProtKB-SubCell"/>
</dbReference>
<dbReference type="GO" id="GO:0015979">
    <property type="term" value="P:photosynthesis"/>
    <property type="evidence" value="ECO:0007669"/>
    <property type="project" value="UniProtKB-UniRule"/>
</dbReference>
<dbReference type="HAMAP" id="MF_01317">
    <property type="entry name" value="PSII_PsbL"/>
    <property type="match status" value="1"/>
</dbReference>
<dbReference type="InterPro" id="IPR003372">
    <property type="entry name" value="PSII_PsbL"/>
</dbReference>
<dbReference type="InterPro" id="IPR037266">
    <property type="entry name" value="PSII_PsbL_sf"/>
</dbReference>
<dbReference type="NCBIfam" id="NF001972">
    <property type="entry name" value="PRK00753.1"/>
    <property type="match status" value="1"/>
</dbReference>
<dbReference type="Pfam" id="PF02419">
    <property type="entry name" value="PsbL"/>
    <property type="match status" value="1"/>
</dbReference>
<dbReference type="SUPFAM" id="SSF161017">
    <property type="entry name" value="Photosystem II reaction center protein L, PsbL"/>
    <property type="match status" value="1"/>
</dbReference>
<proteinExistence type="inferred from homology"/>
<accession>A5GIA8</accession>
<evidence type="ECO:0000255" key="1">
    <source>
        <dbReference type="HAMAP-Rule" id="MF_01317"/>
    </source>
</evidence>
<name>PSBL_SYNPW</name>
<reference key="1">
    <citation type="submission" date="2006-05" db="EMBL/GenBank/DDBJ databases">
        <authorList>
            <consortium name="Genoscope"/>
        </authorList>
    </citation>
    <scope>NUCLEOTIDE SEQUENCE [LARGE SCALE GENOMIC DNA]</scope>
    <source>
        <strain>WH7803</strain>
    </source>
</reference>
<organism>
    <name type="scientific">Synechococcus sp. (strain WH7803)</name>
    <dbReference type="NCBI Taxonomy" id="32051"/>
    <lineage>
        <taxon>Bacteria</taxon>
        <taxon>Bacillati</taxon>
        <taxon>Cyanobacteriota</taxon>
        <taxon>Cyanophyceae</taxon>
        <taxon>Synechococcales</taxon>
        <taxon>Synechococcaceae</taxon>
        <taxon>Synechococcus</taxon>
    </lineage>
</organism>